<organism>
    <name type="scientific">Bacillus anthracis</name>
    <dbReference type="NCBI Taxonomy" id="1392"/>
    <lineage>
        <taxon>Bacteria</taxon>
        <taxon>Bacillati</taxon>
        <taxon>Bacillota</taxon>
        <taxon>Bacilli</taxon>
        <taxon>Bacillales</taxon>
        <taxon>Bacillaceae</taxon>
        <taxon>Bacillus</taxon>
        <taxon>Bacillus cereus group</taxon>
    </lineage>
</organism>
<comment type="function">
    <text evidence="1">F(1)F(0) ATP synthase produces ATP from ADP in the presence of a proton or sodium gradient. F-type ATPases consist of two structural domains, F(1) containing the extramembraneous catalytic core and F(0) containing the membrane proton channel, linked together by a central stalk and a peripheral stalk. During catalysis, ATP synthesis in the catalytic domain of F(1) is coupled via a rotary mechanism of the central stalk subunits to proton translocation.</text>
</comment>
<comment type="subunit">
    <text evidence="1">F-type ATPases have 2 components, F(1) - the catalytic core - and F(0) - the membrane proton channel. F(1) has five subunits: alpha(3), beta(3), gamma(1), delta(1), epsilon(1). F(0) has three main subunits: a(1), b(2) and c(10-14). The alpha and beta chains form an alternating ring which encloses part of the gamma chain. F(1) is attached to F(0) by a central stalk formed by the gamma and epsilon chains, while a peripheral stalk is formed by the delta and b chains.</text>
</comment>
<comment type="subcellular location">
    <subcellularLocation>
        <location evidence="1">Cell membrane</location>
        <topology evidence="1">Multi-pass membrane protein</topology>
    </subcellularLocation>
</comment>
<comment type="similarity">
    <text evidence="1">Belongs to the ATPase C chain family.</text>
</comment>
<evidence type="ECO:0000255" key="1">
    <source>
        <dbReference type="HAMAP-Rule" id="MF_01396"/>
    </source>
</evidence>
<feature type="chain" id="PRO_0000365843" description="ATP synthase subunit c">
    <location>
        <begin position="1"/>
        <end position="72"/>
    </location>
</feature>
<feature type="transmembrane region" description="Helical" evidence="1">
    <location>
        <begin position="1"/>
        <end position="21"/>
    </location>
</feature>
<feature type="transmembrane region" description="Helical" evidence="1">
    <location>
        <begin position="49"/>
        <end position="69"/>
    </location>
</feature>
<feature type="site" description="Reversibly protonated during proton transport" evidence="1">
    <location>
        <position position="56"/>
    </location>
</feature>
<accession>Q81JZ0</accession>
<accession>Q6HQI9</accession>
<accession>Q6KJW4</accession>
<reference key="1">
    <citation type="journal article" date="2009" name="J. Bacteriol.">
        <title>The complete genome sequence of Bacillus anthracis Ames 'Ancestor'.</title>
        <authorList>
            <person name="Ravel J."/>
            <person name="Jiang L."/>
            <person name="Stanley S.T."/>
            <person name="Wilson M.R."/>
            <person name="Decker R.S."/>
            <person name="Read T.D."/>
            <person name="Worsham P."/>
            <person name="Keim P.S."/>
            <person name="Salzberg S.L."/>
            <person name="Fraser-Liggett C.M."/>
            <person name="Rasko D.A."/>
        </authorList>
    </citation>
    <scope>NUCLEOTIDE SEQUENCE [LARGE SCALE GENOMIC DNA]</scope>
    <source>
        <strain>Ames ancestor</strain>
    </source>
</reference>
<reference key="2">
    <citation type="journal article" date="2003" name="Nature">
        <title>The genome sequence of Bacillus anthracis Ames and comparison to closely related bacteria.</title>
        <authorList>
            <person name="Read T.D."/>
            <person name="Peterson S.N."/>
            <person name="Tourasse N.J."/>
            <person name="Baillie L.W."/>
            <person name="Paulsen I.T."/>
            <person name="Nelson K.E."/>
            <person name="Tettelin H."/>
            <person name="Fouts D.E."/>
            <person name="Eisen J.A."/>
            <person name="Gill S.R."/>
            <person name="Holtzapple E.K."/>
            <person name="Okstad O.A."/>
            <person name="Helgason E."/>
            <person name="Rilstone J."/>
            <person name="Wu M."/>
            <person name="Kolonay J.F."/>
            <person name="Beanan M.J."/>
            <person name="Dodson R.J."/>
            <person name="Brinkac L.M."/>
            <person name="Gwinn M.L."/>
            <person name="DeBoy R.T."/>
            <person name="Madpu R."/>
            <person name="Daugherty S.C."/>
            <person name="Durkin A.S."/>
            <person name="Haft D.H."/>
            <person name="Nelson W.C."/>
            <person name="Peterson J.D."/>
            <person name="Pop M."/>
            <person name="Khouri H.M."/>
            <person name="Radune D."/>
            <person name="Benton J.L."/>
            <person name="Mahamoud Y."/>
            <person name="Jiang L."/>
            <person name="Hance I.R."/>
            <person name="Weidman J.F."/>
            <person name="Berry K.J."/>
            <person name="Plaut R.D."/>
            <person name="Wolf A.M."/>
            <person name="Watkins K.L."/>
            <person name="Nierman W.C."/>
            <person name="Hazen A."/>
            <person name="Cline R.T."/>
            <person name="Redmond C."/>
            <person name="Thwaite J.E."/>
            <person name="White O."/>
            <person name="Salzberg S.L."/>
            <person name="Thomason B."/>
            <person name="Friedlander A.M."/>
            <person name="Koehler T.M."/>
            <person name="Hanna P.C."/>
            <person name="Kolstoe A.-B."/>
            <person name="Fraser C.M."/>
        </authorList>
    </citation>
    <scope>NUCLEOTIDE SEQUENCE [LARGE SCALE GENOMIC DNA]</scope>
    <source>
        <strain>Ames / isolate Porton</strain>
    </source>
</reference>
<reference key="3">
    <citation type="submission" date="2004-01" db="EMBL/GenBank/DDBJ databases">
        <title>Complete genome sequence of Bacillus anthracis Sterne.</title>
        <authorList>
            <person name="Brettin T.S."/>
            <person name="Bruce D."/>
            <person name="Challacombe J.F."/>
            <person name="Gilna P."/>
            <person name="Han C."/>
            <person name="Hill K."/>
            <person name="Hitchcock P."/>
            <person name="Jackson P."/>
            <person name="Keim P."/>
            <person name="Longmire J."/>
            <person name="Lucas S."/>
            <person name="Okinaka R."/>
            <person name="Richardson P."/>
            <person name="Rubin E."/>
            <person name="Tice H."/>
        </authorList>
    </citation>
    <scope>NUCLEOTIDE SEQUENCE [LARGE SCALE GENOMIC DNA]</scope>
    <source>
        <strain>Sterne</strain>
    </source>
</reference>
<sequence>MSLGVIAAAIAIGLSALGAGIGNGLIVSRTIEGVARQPELKGALQTIMFIGVALVEALPIIGVVIAFIVMNK</sequence>
<protein>
    <recommendedName>
        <fullName evidence="1">ATP synthase subunit c</fullName>
    </recommendedName>
    <alternativeName>
        <fullName evidence="1">ATP synthase F(0) sector subunit c</fullName>
    </alternativeName>
    <alternativeName>
        <fullName evidence="1">F-type ATPase subunit c</fullName>
        <shortName evidence="1">F-ATPase subunit c</shortName>
    </alternativeName>
    <alternativeName>
        <fullName evidence="1">Lipid-binding protein</fullName>
    </alternativeName>
</protein>
<dbReference type="EMBL" id="AE017334">
    <property type="protein sequence ID" value="AAT34696.1"/>
    <property type="molecule type" value="Genomic_DNA"/>
</dbReference>
<dbReference type="EMBL" id="AE016879">
    <property type="protein sequence ID" value="AAP29196.1"/>
    <property type="molecule type" value="Genomic_DNA"/>
</dbReference>
<dbReference type="EMBL" id="AE017225">
    <property type="protein sequence ID" value="AAT57449.1"/>
    <property type="molecule type" value="Genomic_DNA"/>
</dbReference>
<dbReference type="RefSeq" id="NP_847710.1">
    <property type="nucleotide sequence ID" value="NC_003997.3"/>
</dbReference>
<dbReference type="RefSeq" id="WP_000052064.1">
    <property type="nucleotide sequence ID" value="NZ_WXXJ01000038.1"/>
</dbReference>
<dbReference type="RefSeq" id="YP_031399.1">
    <property type="nucleotide sequence ID" value="NC_005945.1"/>
</dbReference>
<dbReference type="SMR" id="Q81JZ0"/>
<dbReference type="STRING" id="261594.GBAA_5552"/>
<dbReference type="GeneID" id="93005813"/>
<dbReference type="KEGG" id="ban:BA_5552"/>
<dbReference type="KEGG" id="bar:GBAA_5552"/>
<dbReference type="KEGG" id="bat:BAS5160"/>
<dbReference type="PATRIC" id="fig|198094.11.peg.5512"/>
<dbReference type="eggNOG" id="COG0636">
    <property type="taxonomic scope" value="Bacteria"/>
</dbReference>
<dbReference type="HOGENOM" id="CLU_148047_1_1_9"/>
<dbReference type="OMA" id="QPELMNE"/>
<dbReference type="OrthoDB" id="2357540at2"/>
<dbReference type="Proteomes" id="UP000000427">
    <property type="component" value="Chromosome"/>
</dbReference>
<dbReference type="Proteomes" id="UP000000594">
    <property type="component" value="Chromosome"/>
</dbReference>
<dbReference type="GO" id="GO:0005886">
    <property type="term" value="C:plasma membrane"/>
    <property type="evidence" value="ECO:0007669"/>
    <property type="project" value="UniProtKB-SubCell"/>
</dbReference>
<dbReference type="GO" id="GO:0045259">
    <property type="term" value="C:proton-transporting ATP synthase complex"/>
    <property type="evidence" value="ECO:0007669"/>
    <property type="project" value="UniProtKB-KW"/>
</dbReference>
<dbReference type="GO" id="GO:0033177">
    <property type="term" value="C:proton-transporting two-sector ATPase complex, proton-transporting domain"/>
    <property type="evidence" value="ECO:0007669"/>
    <property type="project" value="InterPro"/>
</dbReference>
<dbReference type="GO" id="GO:0008289">
    <property type="term" value="F:lipid binding"/>
    <property type="evidence" value="ECO:0007669"/>
    <property type="project" value="UniProtKB-KW"/>
</dbReference>
<dbReference type="GO" id="GO:0046933">
    <property type="term" value="F:proton-transporting ATP synthase activity, rotational mechanism"/>
    <property type="evidence" value="ECO:0007669"/>
    <property type="project" value="UniProtKB-UniRule"/>
</dbReference>
<dbReference type="CDD" id="cd18185">
    <property type="entry name" value="ATP-synt_Fo_c_ATPE"/>
    <property type="match status" value="1"/>
</dbReference>
<dbReference type="FunFam" id="1.20.20.10:FF:000004">
    <property type="entry name" value="ATP synthase subunit c"/>
    <property type="match status" value="1"/>
</dbReference>
<dbReference type="Gene3D" id="1.20.20.10">
    <property type="entry name" value="F1F0 ATP synthase subunit C"/>
    <property type="match status" value="1"/>
</dbReference>
<dbReference type="HAMAP" id="MF_01396">
    <property type="entry name" value="ATP_synth_c_bact"/>
    <property type="match status" value="1"/>
</dbReference>
<dbReference type="InterPro" id="IPR005953">
    <property type="entry name" value="ATP_synth_csu_bac/chlpt"/>
</dbReference>
<dbReference type="InterPro" id="IPR000454">
    <property type="entry name" value="ATP_synth_F0_csu"/>
</dbReference>
<dbReference type="InterPro" id="IPR020537">
    <property type="entry name" value="ATP_synth_F0_csu_DDCD_BS"/>
</dbReference>
<dbReference type="InterPro" id="IPR038662">
    <property type="entry name" value="ATP_synth_F0_csu_sf"/>
</dbReference>
<dbReference type="InterPro" id="IPR002379">
    <property type="entry name" value="ATPase_proteolipid_c-like_dom"/>
</dbReference>
<dbReference type="InterPro" id="IPR035921">
    <property type="entry name" value="F/V-ATP_Csub_sf"/>
</dbReference>
<dbReference type="NCBIfam" id="TIGR01260">
    <property type="entry name" value="ATP_synt_c"/>
    <property type="match status" value="1"/>
</dbReference>
<dbReference type="NCBIfam" id="NF005363">
    <property type="entry name" value="PRK06876.1"/>
    <property type="match status" value="1"/>
</dbReference>
<dbReference type="PANTHER" id="PTHR10031">
    <property type="entry name" value="ATP SYNTHASE LIPID-BINDING PROTEIN, MITOCHONDRIAL"/>
    <property type="match status" value="1"/>
</dbReference>
<dbReference type="PANTHER" id="PTHR10031:SF0">
    <property type="entry name" value="ATPASE PROTEIN 9"/>
    <property type="match status" value="1"/>
</dbReference>
<dbReference type="Pfam" id="PF00137">
    <property type="entry name" value="ATP-synt_C"/>
    <property type="match status" value="1"/>
</dbReference>
<dbReference type="PRINTS" id="PR00124">
    <property type="entry name" value="ATPASEC"/>
</dbReference>
<dbReference type="SUPFAM" id="SSF81333">
    <property type="entry name" value="F1F0 ATP synthase subunit C"/>
    <property type="match status" value="1"/>
</dbReference>
<dbReference type="PROSITE" id="PS00605">
    <property type="entry name" value="ATPASE_C"/>
    <property type="match status" value="1"/>
</dbReference>
<proteinExistence type="inferred from homology"/>
<gene>
    <name evidence="1" type="primary">atpE</name>
    <name type="ordered locus">BA_5552</name>
    <name type="ordered locus">GBAA_5552</name>
    <name type="ordered locus">BAS5160</name>
</gene>
<name>ATPL_BACAN</name>
<keyword id="KW-0066">ATP synthesis</keyword>
<keyword id="KW-1003">Cell membrane</keyword>
<keyword id="KW-0138">CF(0)</keyword>
<keyword id="KW-0375">Hydrogen ion transport</keyword>
<keyword id="KW-0406">Ion transport</keyword>
<keyword id="KW-0446">Lipid-binding</keyword>
<keyword id="KW-0472">Membrane</keyword>
<keyword id="KW-1185">Reference proteome</keyword>
<keyword id="KW-0812">Transmembrane</keyword>
<keyword id="KW-1133">Transmembrane helix</keyword>
<keyword id="KW-0813">Transport</keyword>